<keyword id="KW-0030">Aminoacyl-tRNA synthetase</keyword>
<keyword id="KW-0067">ATP-binding</keyword>
<keyword id="KW-0963">Cytoplasm</keyword>
<keyword id="KW-0436">Ligase</keyword>
<keyword id="KW-0547">Nucleotide-binding</keyword>
<keyword id="KW-0648">Protein biosynthesis</keyword>
<proteinExistence type="inferred from homology"/>
<gene>
    <name evidence="1" type="primary">gltX2</name>
    <name type="ordered locus">A1E_03870</name>
</gene>
<name>SYE2_RICCK</name>
<feature type="chain" id="PRO_0000367757" description="Glutamate--tRNA ligase 2">
    <location>
        <begin position="1"/>
        <end position="445"/>
    </location>
</feature>
<feature type="short sequence motif" description="'HIGH' region" evidence="1">
    <location>
        <begin position="10"/>
        <end position="20"/>
    </location>
</feature>
<feature type="short sequence motif" description="'KMSKS' region" evidence="1">
    <location>
        <begin position="240"/>
        <end position="244"/>
    </location>
</feature>
<feature type="binding site" evidence="1">
    <location>
        <position position="243"/>
    </location>
    <ligand>
        <name>ATP</name>
        <dbReference type="ChEBI" id="CHEBI:30616"/>
    </ligand>
</feature>
<protein>
    <recommendedName>
        <fullName evidence="1">Glutamate--tRNA ligase 2</fullName>
        <ecNumber evidence="1">6.1.1.17</ecNumber>
    </recommendedName>
    <alternativeName>
        <fullName evidence="1">Glutamyl-tRNA synthetase 2</fullName>
        <shortName evidence="1">GluRS 2</shortName>
    </alternativeName>
</protein>
<comment type="function">
    <text evidence="1">Catalyzes the attachment of glutamate to tRNA(Glu) in a two-step reaction: glutamate is first activated by ATP to form Glu-AMP and then transferred to the acceptor end of tRNA(Glu).</text>
</comment>
<comment type="catalytic activity">
    <reaction evidence="1">
        <text>tRNA(Glu) + L-glutamate + ATP = L-glutamyl-tRNA(Glu) + AMP + diphosphate</text>
        <dbReference type="Rhea" id="RHEA:23540"/>
        <dbReference type="Rhea" id="RHEA-COMP:9663"/>
        <dbReference type="Rhea" id="RHEA-COMP:9680"/>
        <dbReference type="ChEBI" id="CHEBI:29985"/>
        <dbReference type="ChEBI" id="CHEBI:30616"/>
        <dbReference type="ChEBI" id="CHEBI:33019"/>
        <dbReference type="ChEBI" id="CHEBI:78442"/>
        <dbReference type="ChEBI" id="CHEBI:78520"/>
        <dbReference type="ChEBI" id="CHEBI:456215"/>
        <dbReference type="EC" id="6.1.1.17"/>
    </reaction>
</comment>
<comment type="subunit">
    <text evidence="1">Monomer.</text>
</comment>
<comment type="subcellular location">
    <subcellularLocation>
        <location evidence="1">Cytoplasm</location>
    </subcellularLocation>
</comment>
<comment type="similarity">
    <text evidence="1">Belongs to the class-I aminoacyl-tRNA synthetase family. Glutamate--tRNA ligase type 1 subfamily.</text>
</comment>
<organism>
    <name type="scientific">Rickettsia canadensis (strain McKiel)</name>
    <dbReference type="NCBI Taxonomy" id="293613"/>
    <lineage>
        <taxon>Bacteria</taxon>
        <taxon>Pseudomonadati</taxon>
        <taxon>Pseudomonadota</taxon>
        <taxon>Alphaproteobacteria</taxon>
        <taxon>Rickettsiales</taxon>
        <taxon>Rickettsiaceae</taxon>
        <taxon>Rickettsieae</taxon>
        <taxon>Rickettsia</taxon>
        <taxon>belli group</taxon>
    </lineage>
</organism>
<accession>A8EZB8</accession>
<evidence type="ECO:0000255" key="1">
    <source>
        <dbReference type="HAMAP-Rule" id="MF_00022"/>
    </source>
</evidence>
<reference key="1">
    <citation type="submission" date="2007-09" db="EMBL/GenBank/DDBJ databases">
        <title>Complete genome sequence of Rickettsia canadensis.</title>
        <authorList>
            <person name="Madan A."/>
            <person name="Fahey J."/>
            <person name="Helton E."/>
            <person name="Ketteman M."/>
            <person name="Madan A."/>
            <person name="Rodrigues S."/>
            <person name="Sanchez A."/>
            <person name="Whiting M."/>
            <person name="Dasch G."/>
            <person name="Eremeeva M."/>
        </authorList>
    </citation>
    <scope>NUCLEOTIDE SEQUENCE [LARGE SCALE GENOMIC DNA]</scope>
    <source>
        <strain>McKiel</strain>
    </source>
</reference>
<sequence>MTKVITRFAPSPTGMLHVGNIRVALLNWLYAKKHNGQFILRFDDTDLERSKQEYKNAIEEDLKFLKINWDQTFNQLSRLSRYDVIKKLLLDKKRLYTCYETPEELELKRKVQLSKGLPPIYDRASLNLTTEQIKKYIEQGRKPHYRFLVNHELISWHDMIKGEVKYDGKALSDPIVIRADGSMTYMLCSVIDDIDYDITHIIRGEDHVGNTAIQIQMFEALNKIPPVFGHLSLIINKDEKISKRIGGFEIATLRKQIGLEAMAIASFFSLLGSSSQILPYKNMDELATQFEISNFSKSPTMYQPEDLVRLNHKLLISVDFDEVKERLKEIDATYIDENFWLSVRPNLQKLRDVKDWWDICNQTPNVENLNLDKEYLKQAAELLPQGEITKDSWRIWTKEITNITSRKGKELFLPLRLALTGRESGPEIAGILPLIDRKEIIKRLT</sequence>
<dbReference type="EC" id="6.1.1.17" evidence="1"/>
<dbReference type="EMBL" id="CP000409">
    <property type="protein sequence ID" value="ABV73701.1"/>
    <property type="molecule type" value="Genomic_DNA"/>
</dbReference>
<dbReference type="RefSeq" id="WP_012148896.1">
    <property type="nucleotide sequence ID" value="NC_009879.1"/>
</dbReference>
<dbReference type="SMR" id="A8EZB8"/>
<dbReference type="STRING" id="293613.A1E_03870"/>
<dbReference type="KEGG" id="rcm:A1E_03870"/>
<dbReference type="eggNOG" id="COG0008">
    <property type="taxonomic scope" value="Bacteria"/>
</dbReference>
<dbReference type="HOGENOM" id="CLU_015768_6_1_5"/>
<dbReference type="Proteomes" id="UP000007056">
    <property type="component" value="Chromosome"/>
</dbReference>
<dbReference type="GO" id="GO:0005737">
    <property type="term" value="C:cytoplasm"/>
    <property type="evidence" value="ECO:0007669"/>
    <property type="project" value="UniProtKB-SubCell"/>
</dbReference>
<dbReference type="GO" id="GO:0005524">
    <property type="term" value="F:ATP binding"/>
    <property type="evidence" value="ECO:0007669"/>
    <property type="project" value="UniProtKB-UniRule"/>
</dbReference>
<dbReference type="GO" id="GO:0004818">
    <property type="term" value="F:glutamate-tRNA ligase activity"/>
    <property type="evidence" value="ECO:0007669"/>
    <property type="project" value="UniProtKB-UniRule"/>
</dbReference>
<dbReference type="GO" id="GO:0000049">
    <property type="term" value="F:tRNA binding"/>
    <property type="evidence" value="ECO:0007669"/>
    <property type="project" value="InterPro"/>
</dbReference>
<dbReference type="GO" id="GO:0006424">
    <property type="term" value="P:glutamyl-tRNA aminoacylation"/>
    <property type="evidence" value="ECO:0007669"/>
    <property type="project" value="UniProtKB-UniRule"/>
</dbReference>
<dbReference type="Gene3D" id="1.10.10.350">
    <property type="match status" value="1"/>
</dbReference>
<dbReference type="Gene3D" id="3.40.50.620">
    <property type="entry name" value="HUPs"/>
    <property type="match status" value="1"/>
</dbReference>
<dbReference type="HAMAP" id="MF_00022">
    <property type="entry name" value="Glu_tRNA_synth_type1"/>
    <property type="match status" value="1"/>
</dbReference>
<dbReference type="InterPro" id="IPR045462">
    <property type="entry name" value="aa-tRNA-synth_I_cd-bd"/>
</dbReference>
<dbReference type="InterPro" id="IPR020751">
    <property type="entry name" value="aa-tRNA-synth_I_codon-bd_sub2"/>
</dbReference>
<dbReference type="InterPro" id="IPR001412">
    <property type="entry name" value="aa-tRNA-synth_I_CS"/>
</dbReference>
<dbReference type="InterPro" id="IPR008925">
    <property type="entry name" value="aa_tRNA-synth_I_cd-bd_sf"/>
</dbReference>
<dbReference type="InterPro" id="IPR004527">
    <property type="entry name" value="Glu-tRNA-ligase_bac/mito"/>
</dbReference>
<dbReference type="InterPro" id="IPR000924">
    <property type="entry name" value="Glu/Gln-tRNA-synth"/>
</dbReference>
<dbReference type="InterPro" id="IPR020058">
    <property type="entry name" value="Glu/Gln-tRNA-synth_Ib_cat-dom"/>
</dbReference>
<dbReference type="InterPro" id="IPR049940">
    <property type="entry name" value="GluQ/Sye"/>
</dbReference>
<dbReference type="InterPro" id="IPR014729">
    <property type="entry name" value="Rossmann-like_a/b/a_fold"/>
</dbReference>
<dbReference type="NCBIfam" id="TIGR00464">
    <property type="entry name" value="gltX_bact"/>
    <property type="match status" value="1"/>
</dbReference>
<dbReference type="PANTHER" id="PTHR43311">
    <property type="entry name" value="GLUTAMATE--TRNA LIGASE"/>
    <property type="match status" value="1"/>
</dbReference>
<dbReference type="PANTHER" id="PTHR43311:SF2">
    <property type="entry name" value="GLUTAMATE--TRNA LIGASE, MITOCHONDRIAL-RELATED"/>
    <property type="match status" value="1"/>
</dbReference>
<dbReference type="Pfam" id="PF19269">
    <property type="entry name" value="Anticodon_2"/>
    <property type="match status" value="1"/>
</dbReference>
<dbReference type="Pfam" id="PF00749">
    <property type="entry name" value="tRNA-synt_1c"/>
    <property type="match status" value="1"/>
</dbReference>
<dbReference type="PRINTS" id="PR00987">
    <property type="entry name" value="TRNASYNTHGLU"/>
</dbReference>
<dbReference type="SUPFAM" id="SSF48163">
    <property type="entry name" value="An anticodon-binding domain of class I aminoacyl-tRNA synthetases"/>
    <property type="match status" value="1"/>
</dbReference>
<dbReference type="SUPFAM" id="SSF52374">
    <property type="entry name" value="Nucleotidylyl transferase"/>
    <property type="match status" value="1"/>
</dbReference>
<dbReference type="PROSITE" id="PS00178">
    <property type="entry name" value="AA_TRNA_LIGASE_I"/>
    <property type="match status" value="1"/>
</dbReference>